<feature type="chain" id="PRO_0000346032" description="Protoheme IX farnesyltransferase">
    <location>
        <begin position="1"/>
        <end position="315"/>
    </location>
</feature>
<feature type="transmembrane region" description="Helical" evidence="1">
    <location>
        <begin position="32"/>
        <end position="52"/>
    </location>
</feature>
<feature type="transmembrane region" description="Helical" evidence="1">
    <location>
        <begin position="53"/>
        <end position="73"/>
    </location>
</feature>
<feature type="transmembrane region" description="Helical" evidence="1">
    <location>
        <begin position="93"/>
        <end position="113"/>
    </location>
</feature>
<feature type="transmembrane region" description="Helical" evidence="1">
    <location>
        <begin position="120"/>
        <end position="140"/>
    </location>
</feature>
<feature type="transmembrane region" description="Helical" evidence="1">
    <location>
        <begin position="153"/>
        <end position="173"/>
    </location>
</feature>
<feature type="transmembrane region" description="Helical" evidence="1">
    <location>
        <begin position="180"/>
        <end position="200"/>
    </location>
</feature>
<feature type="transmembrane region" description="Helical" evidence="1">
    <location>
        <begin position="226"/>
        <end position="246"/>
    </location>
</feature>
<feature type="transmembrane region" description="Helical" evidence="1">
    <location>
        <begin position="249"/>
        <end position="269"/>
    </location>
</feature>
<feature type="transmembrane region" description="Helical" evidence="1">
    <location>
        <begin position="295"/>
        <end position="315"/>
    </location>
</feature>
<name>COXX_BRUSI</name>
<proteinExistence type="inferred from homology"/>
<organism>
    <name type="scientific">Brucella suis (strain ATCC 23445 / NCTC 10510)</name>
    <dbReference type="NCBI Taxonomy" id="470137"/>
    <lineage>
        <taxon>Bacteria</taxon>
        <taxon>Pseudomonadati</taxon>
        <taxon>Pseudomonadota</taxon>
        <taxon>Alphaproteobacteria</taxon>
        <taxon>Hyphomicrobiales</taxon>
        <taxon>Brucellaceae</taxon>
        <taxon>Brucella/Ochrobactrum group</taxon>
        <taxon>Brucella</taxon>
    </lineage>
</organism>
<keyword id="KW-0997">Cell inner membrane</keyword>
<keyword id="KW-1003">Cell membrane</keyword>
<keyword id="KW-0350">Heme biosynthesis</keyword>
<keyword id="KW-0472">Membrane</keyword>
<keyword id="KW-0808">Transferase</keyword>
<keyword id="KW-0812">Transmembrane</keyword>
<keyword id="KW-1133">Transmembrane helix</keyword>
<protein>
    <recommendedName>
        <fullName evidence="1">Protoheme IX farnesyltransferase</fullName>
        <ecNumber evidence="1">2.5.1.141</ecNumber>
    </recommendedName>
    <alternativeName>
        <fullName evidence="1">Heme B farnesyltransferase</fullName>
    </alternativeName>
    <alternativeName>
        <fullName evidence="1">Heme O synthase</fullName>
    </alternativeName>
</protein>
<evidence type="ECO:0000255" key="1">
    <source>
        <dbReference type="HAMAP-Rule" id="MF_00154"/>
    </source>
</evidence>
<accession>B0CKF4</accession>
<comment type="function">
    <text evidence="1">Converts heme B (protoheme IX) to heme O by substitution of the vinyl group on carbon 2 of heme B porphyrin ring with a hydroxyethyl farnesyl side group.</text>
</comment>
<comment type="catalytic activity">
    <reaction evidence="1">
        <text>heme b + (2E,6E)-farnesyl diphosphate + H2O = Fe(II)-heme o + diphosphate</text>
        <dbReference type="Rhea" id="RHEA:28070"/>
        <dbReference type="ChEBI" id="CHEBI:15377"/>
        <dbReference type="ChEBI" id="CHEBI:33019"/>
        <dbReference type="ChEBI" id="CHEBI:60344"/>
        <dbReference type="ChEBI" id="CHEBI:60530"/>
        <dbReference type="ChEBI" id="CHEBI:175763"/>
        <dbReference type="EC" id="2.5.1.141"/>
    </reaction>
</comment>
<comment type="pathway">
    <text evidence="1">Porphyrin-containing compound metabolism; heme O biosynthesis; heme O from protoheme: step 1/1.</text>
</comment>
<comment type="subcellular location">
    <subcellularLocation>
        <location evidence="1">Cell inner membrane</location>
        <topology evidence="1">Multi-pass membrane protein</topology>
    </subcellularLocation>
</comment>
<comment type="miscellaneous">
    <text evidence="1">Carbon 2 of the heme B porphyrin ring is defined according to the Fischer nomenclature.</text>
</comment>
<comment type="similarity">
    <text evidence="1">Belongs to the UbiA prenyltransferase family. Protoheme IX farnesyltransferase subfamily.</text>
</comment>
<reference key="1">
    <citation type="submission" date="2007-12" db="EMBL/GenBank/DDBJ databases">
        <title>Brucella suis ATCC 23445 whole genome shotgun sequencing project.</title>
        <authorList>
            <person name="Setubal J.C."/>
            <person name="Bowns C."/>
            <person name="Boyle S."/>
            <person name="Crasta O.R."/>
            <person name="Czar M.J."/>
            <person name="Dharmanolla C."/>
            <person name="Gillespie J.J."/>
            <person name="Kenyon R.W."/>
            <person name="Lu J."/>
            <person name="Mane S."/>
            <person name="Mohapatra S."/>
            <person name="Nagrani S."/>
            <person name="Purkayastha A."/>
            <person name="Rajasimha H.K."/>
            <person name="Shallom J.M."/>
            <person name="Shallom S."/>
            <person name="Shukla M."/>
            <person name="Snyder E.E."/>
            <person name="Sobral B.W."/>
            <person name="Wattam A.R."/>
            <person name="Will R."/>
            <person name="Williams K."/>
            <person name="Yoo H."/>
            <person name="Bruce D."/>
            <person name="Detter C."/>
            <person name="Munk C."/>
            <person name="Brettin T.S."/>
        </authorList>
    </citation>
    <scope>NUCLEOTIDE SEQUENCE [LARGE SCALE GENOMIC DNA]</scope>
    <source>
        <strain>ATCC 23445 / NCTC 10510</strain>
    </source>
</reference>
<sequence length="315" mass="34421">MSLVEKNTASEDAFALSEATARDYLVLLKPRVMSLVVFTGLVGLVLAPGHMNPVLAVISILCIAVGAGASGALNMWYDADIDAVMKRTRKRPIPAGIIAPNQVLAFGLTLSAFSVMTLGLMVNWLAAALLAFTIFFYAVIYTMWLKRSTPQNIVIGGAAGAFPPMIGWAAATGEITWDSLVLFMIIFLWTPPHFWALSLFTTNDYEAARIPMMPNVKGELSTRRQALFYAVLMAPVGVLPWVMGFAGMFYGVVSTLLGLAFVYYAWRLWAADSQLQMLAAARKLFRFSLLYLAGIFAVLLFEALTFKLLAAFGVF</sequence>
<dbReference type="EC" id="2.5.1.141" evidence="1"/>
<dbReference type="EMBL" id="CP000911">
    <property type="protein sequence ID" value="ABY37584.1"/>
    <property type="molecule type" value="Genomic_DNA"/>
</dbReference>
<dbReference type="RefSeq" id="WP_006072270.1">
    <property type="nucleotide sequence ID" value="NC_010169.1"/>
</dbReference>
<dbReference type="SMR" id="B0CKF4"/>
<dbReference type="KEGG" id="bmt:BSUIS_A0496"/>
<dbReference type="HOGENOM" id="CLU_029631_0_2_5"/>
<dbReference type="UniPathway" id="UPA00834">
    <property type="reaction ID" value="UER00712"/>
</dbReference>
<dbReference type="Proteomes" id="UP000008545">
    <property type="component" value="Chromosome I"/>
</dbReference>
<dbReference type="GO" id="GO:0005886">
    <property type="term" value="C:plasma membrane"/>
    <property type="evidence" value="ECO:0007669"/>
    <property type="project" value="UniProtKB-SubCell"/>
</dbReference>
<dbReference type="GO" id="GO:0008495">
    <property type="term" value="F:protoheme IX farnesyltransferase activity"/>
    <property type="evidence" value="ECO:0007669"/>
    <property type="project" value="UniProtKB-UniRule"/>
</dbReference>
<dbReference type="GO" id="GO:0048034">
    <property type="term" value="P:heme O biosynthetic process"/>
    <property type="evidence" value="ECO:0007669"/>
    <property type="project" value="UniProtKB-UniRule"/>
</dbReference>
<dbReference type="CDD" id="cd13957">
    <property type="entry name" value="PT_UbiA_Cox10"/>
    <property type="match status" value="1"/>
</dbReference>
<dbReference type="FunFam" id="1.10.357.140:FF:000001">
    <property type="entry name" value="Protoheme IX farnesyltransferase"/>
    <property type="match status" value="1"/>
</dbReference>
<dbReference type="Gene3D" id="1.10.357.140">
    <property type="entry name" value="UbiA prenyltransferase"/>
    <property type="match status" value="1"/>
</dbReference>
<dbReference type="HAMAP" id="MF_00154">
    <property type="entry name" value="CyoE_CtaB"/>
    <property type="match status" value="1"/>
</dbReference>
<dbReference type="InterPro" id="IPR006369">
    <property type="entry name" value="Protohaem_IX_farnesylTrfase"/>
</dbReference>
<dbReference type="InterPro" id="IPR000537">
    <property type="entry name" value="UbiA_prenyltransferase"/>
</dbReference>
<dbReference type="InterPro" id="IPR030470">
    <property type="entry name" value="UbiA_prenylTrfase_CS"/>
</dbReference>
<dbReference type="InterPro" id="IPR044878">
    <property type="entry name" value="UbiA_sf"/>
</dbReference>
<dbReference type="NCBIfam" id="TIGR01473">
    <property type="entry name" value="cyoE_ctaB"/>
    <property type="match status" value="1"/>
</dbReference>
<dbReference type="NCBIfam" id="NF003349">
    <property type="entry name" value="PRK04375.1-2"/>
    <property type="match status" value="1"/>
</dbReference>
<dbReference type="PANTHER" id="PTHR43448:SF7">
    <property type="entry name" value="4-HYDROXYBENZOATE SOLANESYLTRANSFERASE"/>
    <property type="match status" value="1"/>
</dbReference>
<dbReference type="PANTHER" id="PTHR43448">
    <property type="entry name" value="PROTOHEME IX FARNESYLTRANSFERASE, MITOCHONDRIAL"/>
    <property type="match status" value="1"/>
</dbReference>
<dbReference type="Pfam" id="PF01040">
    <property type="entry name" value="UbiA"/>
    <property type="match status" value="1"/>
</dbReference>
<dbReference type="PROSITE" id="PS00943">
    <property type="entry name" value="UBIA"/>
    <property type="match status" value="1"/>
</dbReference>
<gene>
    <name evidence="1" type="primary">ctaB</name>
    <name type="ordered locus">BSUIS_A0496</name>
</gene>